<sequence>MQGRLSVWLVKHGLVHRSLGFDYQGIETLQIKPEDWHSIAVILYVYGYNYLRSQCAYDVAPGGLLASVYHLTRIEYGVDQPEEVCIKVFAPRSNPRIPSVFWVWKSSDFQERESYDMLGISYENHPRLKRILMPESWIGWPLRKDYIAPNFYEIQDAH</sequence>
<name>NDHJ_GOSHI</name>
<reference key="1">
    <citation type="journal article" date="2006" name="BMC Genomics">
        <title>The complete chloroplast genome sequence of Gossypium hirsutum: organization and phylogenetic relationships to other angiosperms.</title>
        <authorList>
            <person name="Lee S.-B."/>
            <person name="Kaittanis C."/>
            <person name="Jansen R.K."/>
            <person name="Hostetler J.B."/>
            <person name="Tallon L.J."/>
            <person name="Town C.D."/>
            <person name="Daniell H."/>
        </authorList>
    </citation>
    <scope>NUCLEOTIDE SEQUENCE [LARGE SCALE GENOMIC DNA]</scope>
    <source>
        <strain>cv. Coker 310FR</strain>
    </source>
</reference>
<organism>
    <name type="scientific">Gossypium hirsutum</name>
    <name type="common">Upland cotton</name>
    <name type="synonym">Gossypium mexicanum</name>
    <dbReference type="NCBI Taxonomy" id="3635"/>
    <lineage>
        <taxon>Eukaryota</taxon>
        <taxon>Viridiplantae</taxon>
        <taxon>Streptophyta</taxon>
        <taxon>Embryophyta</taxon>
        <taxon>Tracheophyta</taxon>
        <taxon>Spermatophyta</taxon>
        <taxon>Magnoliopsida</taxon>
        <taxon>eudicotyledons</taxon>
        <taxon>Gunneridae</taxon>
        <taxon>Pentapetalae</taxon>
        <taxon>rosids</taxon>
        <taxon>malvids</taxon>
        <taxon>Malvales</taxon>
        <taxon>Malvaceae</taxon>
        <taxon>Malvoideae</taxon>
        <taxon>Gossypium</taxon>
    </lineage>
</organism>
<gene>
    <name evidence="1" type="primary">ndhJ</name>
</gene>
<accession>Q2L910</accession>
<geneLocation type="chloroplast"/>
<feature type="chain" id="PRO_0000358268" description="NAD(P)H-quinone oxidoreductase subunit J, chloroplastic">
    <location>
        <begin position="1"/>
        <end position="158"/>
    </location>
</feature>
<keyword id="KW-0150">Chloroplast</keyword>
<keyword id="KW-0472">Membrane</keyword>
<keyword id="KW-0520">NAD</keyword>
<keyword id="KW-0521">NADP</keyword>
<keyword id="KW-0934">Plastid</keyword>
<keyword id="KW-0618">Plastoquinone</keyword>
<keyword id="KW-0874">Quinone</keyword>
<keyword id="KW-1185">Reference proteome</keyword>
<keyword id="KW-0793">Thylakoid</keyword>
<keyword id="KW-1278">Translocase</keyword>
<keyword id="KW-0813">Transport</keyword>
<protein>
    <recommendedName>
        <fullName evidence="1">NAD(P)H-quinone oxidoreductase subunit J, chloroplastic</fullName>
        <ecNumber evidence="1">7.1.1.-</ecNumber>
    </recommendedName>
    <alternativeName>
        <fullName>NAD(P)H dehydrogenase subunit J</fullName>
    </alternativeName>
    <alternativeName>
        <fullName evidence="1">NADH-plastoquinone oxidoreductase subunit J</fullName>
    </alternativeName>
</protein>
<dbReference type="EC" id="7.1.1.-" evidence="1"/>
<dbReference type="EMBL" id="DQ345959">
    <property type="protein sequence ID" value="ABC73632.1"/>
    <property type="molecule type" value="Genomic_DNA"/>
</dbReference>
<dbReference type="RefSeq" id="YP_538938.1">
    <property type="nucleotide sequence ID" value="NC_007944.1"/>
</dbReference>
<dbReference type="SMR" id="Q2L910"/>
<dbReference type="GeneID" id="3989151"/>
<dbReference type="KEGG" id="ghi:3989151"/>
<dbReference type="OMA" id="NYLQCQG"/>
<dbReference type="OrthoDB" id="173at41938"/>
<dbReference type="Proteomes" id="UP000189702">
    <property type="component" value="Chloroplast Pltd"/>
</dbReference>
<dbReference type="GO" id="GO:0009535">
    <property type="term" value="C:chloroplast thylakoid membrane"/>
    <property type="evidence" value="ECO:0007669"/>
    <property type="project" value="UniProtKB-SubCell"/>
</dbReference>
<dbReference type="GO" id="GO:0008137">
    <property type="term" value="F:NADH dehydrogenase (ubiquinone) activity"/>
    <property type="evidence" value="ECO:0007669"/>
    <property type="project" value="InterPro"/>
</dbReference>
<dbReference type="GO" id="GO:0048038">
    <property type="term" value="F:quinone binding"/>
    <property type="evidence" value="ECO:0007669"/>
    <property type="project" value="UniProtKB-KW"/>
</dbReference>
<dbReference type="GO" id="GO:0019684">
    <property type="term" value="P:photosynthesis, light reaction"/>
    <property type="evidence" value="ECO:0007669"/>
    <property type="project" value="UniProtKB-UniRule"/>
</dbReference>
<dbReference type="FunFam" id="3.30.460.80:FF:000004">
    <property type="entry name" value="NAD(P)H-quinone oxidoreductase subunit J, chloroplastic"/>
    <property type="match status" value="1"/>
</dbReference>
<dbReference type="Gene3D" id="3.30.460.80">
    <property type="entry name" value="NADH:ubiquinone oxidoreductase, 30kDa subunit"/>
    <property type="match status" value="1"/>
</dbReference>
<dbReference type="HAMAP" id="MF_01357">
    <property type="entry name" value="NDH1_NuoC"/>
    <property type="match status" value="1"/>
</dbReference>
<dbReference type="InterPro" id="IPR010218">
    <property type="entry name" value="NADH_DH_suC"/>
</dbReference>
<dbReference type="InterPro" id="IPR037232">
    <property type="entry name" value="NADH_quin_OxRdtase_su_C/D-like"/>
</dbReference>
<dbReference type="InterPro" id="IPR001268">
    <property type="entry name" value="NADH_UbQ_OxRdtase_30kDa_su"/>
</dbReference>
<dbReference type="InterPro" id="IPR020396">
    <property type="entry name" value="NADH_UbQ_OxRdtase_CS"/>
</dbReference>
<dbReference type="NCBIfam" id="NF009141">
    <property type="entry name" value="PRK12494.1"/>
    <property type="match status" value="1"/>
</dbReference>
<dbReference type="PANTHER" id="PTHR10884:SF14">
    <property type="entry name" value="NADH DEHYDROGENASE [UBIQUINONE] IRON-SULFUR PROTEIN 3, MITOCHONDRIAL"/>
    <property type="match status" value="1"/>
</dbReference>
<dbReference type="PANTHER" id="PTHR10884">
    <property type="entry name" value="NADH DEHYDROGENASE UBIQUINONE IRON-SULFUR PROTEIN 3"/>
    <property type="match status" value="1"/>
</dbReference>
<dbReference type="Pfam" id="PF00329">
    <property type="entry name" value="Complex1_30kDa"/>
    <property type="match status" value="1"/>
</dbReference>
<dbReference type="SUPFAM" id="SSF143243">
    <property type="entry name" value="Nqo5-like"/>
    <property type="match status" value="1"/>
</dbReference>
<dbReference type="PROSITE" id="PS00542">
    <property type="entry name" value="COMPLEX1_30K"/>
    <property type="match status" value="1"/>
</dbReference>
<comment type="function">
    <text evidence="1">NDH shuttles electrons from NAD(P)H:plastoquinone, via FMN and iron-sulfur (Fe-S) centers, to quinones in the photosynthetic chain and possibly in a chloroplast respiratory chain. The immediate electron acceptor for the enzyme in this species is believed to be plastoquinone. Couples the redox reaction to proton translocation, and thus conserves the redox energy in a proton gradient.</text>
</comment>
<comment type="catalytic activity">
    <reaction evidence="1">
        <text>a plastoquinone + NADH + (n+1) H(+)(in) = a plastoquinol + NAD(+) + n H(+)(out)</text>
        <dbReference type="Rhea" id="RHEA:42608"/>
        <dbReference type="Rhea" id="RHEA-COMP:9561"/>
        <dbReference type="Rhea" id="RHEA-COMP:9562"/>
        <dbReference type="ChEBI" id="CHEBI:15378"/>
        <dbReference type="ChEBI" id="CHEBI:17757"/>
        <dbReference type="ChEBI" id="CHEBI:57540"/>
        <dbReference type="ChEBI" id="CHEBI:57945"/>
        <dbReference type="ChEBI" id="CHEBI:62192"/>
    </reaction>
</comment>
<comment type="catalytic activity">
    <reaction evidence="1">
        <text>a plastoquinone + NADPH + (n+1) H(+)(in) = a plastoquinol + NADP(+) + n H(+)(out)</text>
        <dbReference type="Rhea" id="RHEA:42612"/>
        <dbReference type="Rhea" id="RHEA-COMP:9561"/>
        <dbReference type="Rhea" id="RHEA-COMP:9562"/>
        <dbReference type="ChEBI" id="CHEBI:15378"/>
        <dbReference type="ChEBI" id="CHEBI:17757"/>
        <dbReference type="ChEBI" id="CHEBI:57783"/>
        <dbReference type="ChEBI" id="CHEBI:58349"/>
        <dbReference type="ChEBI" id="CHEBI:62192"/>
    </reaction>
</comment>
<comment type="subunit">
    <text evidence="1">NDH is composed of at least 16 different subunits, 5 of which are encoded in the nucleus.</text>
</comment>
<comment type="subcellular location">
    <subcellularLocation>
        <location evidence="1">Plastid</location>
        <location evidence="1">Chloroplast thylakoid membrane</location>
        <topology evidence="1">Peripheral membrane protein</topology>
        <orientation evidence="1">Stromal side</orientation>
    </subcellularLocation>
</comment>
<comment type="similarity">
    <text evidence="1">Belongs to the complex I 30 kDa subunit family.</text>
</comment>
<proteinExistence type="inferred from homology"/>
<evidence type="ECO:0000255" key="1">
    <source>
        <dbReference type="HAMAP-Rule" id="MF_01357"/>
    </source>
</evidence>